<reference key="1">
    <citation type="journal article" date="2005" name="J. Gen. Virol.">
        <title>A novel class of herpesvirus with bivalve hosts.</title>
        <authorList>
            <person name="Davison A.J."/>
            <person name="Trus B.L."/>
            <person name="Cheng N."/>
            <person name="Steven A.C."/>
            <person name="Watson M.S."/>
            <person name="Cunningham C."/>
            <person name="Le Deuff R.M."/>
            <person name="Renault T."/>
        </authorList>
    </citation>
    <scope>NUCLEOTIDE SEQUENCE [LARGE SCALE GENOMIC DNA]</scope>
</reference>
<feature type="chain" id="PRO_0000385046" description="Uncharacterized protein ORF14">
    <location>
        <begin position="1"/>
        <end position="194"/>
    </location>
</feature>
<proteinExistence type="predicted"/>
<gene>
    <name type="ORF">ORF14</name>
</gene>
<organism>
    <name type="scientific">Ostreid herpesvirus 1 (isolate France)</name>
    <name type="common">OsHV-1</name>
    <name type="synonym">Pacific oyster herpesvirus</name>
    <dbReference type="NCBI Taxonomy" id="654903"/>
    <lineage>
        <taxon>Viruses</taxon>
        <taxon>Duplodnaviria</taxon>
        <taxon>Heunggongvirae</taxon>
        <taxon>Peploviricota</taxon>
        <taxon>Herviviricetes</taxon>
        <taxon>Herpesvirales</taxon>
        <taxon>Malacoherpesviridae</taxon>
        <taxon>Ostreavirus</taxon>
        <taxon>Ostreavirus ostreidmalaco1</taxon>
        <taxon>Ostreid herpesvirus 1</taxon>
    </lineage>
</organism>
<keyword id="KW-1185">Reference proteome</keyword>
<dbReference type="EMBL" id="AY509253">
    <property type="protein sequence ID" value="AAS00906.1"/>
    <property type="molecule type" value="Genomic_DNA"/>
</dbReference>
<dbReference type="RefSeq" id="YP_024559.1">
    <property type="nucleotide sequence ID" value="NC_005881.2"/>
</dbReference>
<dbReference type="KEGG" id="vg:2948221"/>
<dbReference type="Proteomes" id="UP000007021">
    <property type="component" value="Segment"/>
</dbReference>
<organismHost>
    <name type="scientific">Magallana gigas</name>
    <name type="common">Pacific oyster</name>
    <name type="synonym">Crassostrea gigas</name>
    <dbReference type="NCBI Taxonomy" id="29159"/>
</organismHost>
<organismHost>
    <name type="scientific">Pecten maximus</name>
    <name type="common">King scallop</name>
    <name type="synonym">Pilgrim's clam</name>
    <dbReference type="NCBI Taxonomy" id="6579"/>
</organismHost>
<name>Y014_OSHVF</name>
<sequence length="194" mass="22267">MSKQRKSVTFFNNALDESPVETIFPMEKENKNRITPGLTELIETNMNLRRKCKLENCPKWDPNPDRARKVAYIQTLIVTQSSKLFMDEVDSFFNNRYVMSRDPTAQITVGKRMMGLTTMVVSGSLELELRLSKANKCVVCCKSGQPNNICDGCHEDVELVREVIDSLGMNYRNLFVTNDYDENDYESDIESIDV</sequence>
<protein>
    <recommendedName>
        <fullName>Uncharacterized protein ORF14</fullName>
    </recommendedName>
</protein>
<accession>Q6R7K9</accession>